<dbReference type="EMBL" id="AF059339">
    <property type="protein sequence ID" value="AAC14720.1"/>
    <property type="molecule type" value="Genomic_DNA"/>
</dbReference>
<dbReference type="EMBL" id="CP000951">
    <property type="protein sequence ID" value="ACA99916.1"/>
    <property type="molecule type" value="Genomic_DNA"/>
</dbReference>
<dbReference type="RefSeq" id="WP_012307539.1">
    <property type="nucleotide sequence ID" value="NZ_JAHHPU010000002.1"/>
</dbReference>
<dbReference type="PDB" id="7EXT">
    <property type="method" value="EM"/>
    <property type="resolution" value="3.50 A"/>
    <property type="chains" value="B7/D7/F7/H3/I7/J3/K7/L3/M3/M7/O3/P7/R7/S3/T7/U3/W3/W7/Y3/Y7/a3/a7/c3/e3/h3/j3/l3/n3/p3/r3=1-161"/>
</dbReference>
<dbReference type="PDBsum" id="7EXT"/>
<dbReference type="EMDB" id="EMD-31373"/>
<dbReference type="SMR" id="O68970"/>
<dbReference type="STRING" id="32049.SYNPCC7002_A1929"/>
<dbReference type="iPTMnet" id="O68970"/>
<dbReference type="KEGG" id="syp:SYNPCC7002_A1929"/>
<dbReference type="eggNOG" id="ENOG502Z7X0">
    <property type="taxonomic scope" value="Bacteria"/>
</dbReference>
<dbReference type="HOGENOM" id="CLU_104219_2_0_3"/>
<dbReference type="Proteomes" id="UP000001688">
    <property type="component" value="Chromosome"/>
</dbReference>
<dbReference type="GO" id="GO:0030089">
    <property type="term" value="C:phycobilisome"/>
    <property type="evidence" value="ECO:0007669"/>
    <property type="project" value="UniProtKB-KW"/>
</dbReference>
<dbReference type="GO" id="GO:0031676">
    <property type="term" value="C:plasma membrane-derived thylakoid membrane"/>
    <property type="evidence" value="ECO:0007669"/>
    <property type="project" value="UniProtKB-SubCell"/>
</dbReference>
<dbReference type="GO" id="GO:0015979">
    <property type="term" value="P:photosynthesis"/>
    <property type="evidence" value="ECO:0007669"/>
    <property type="project" value="UniProtKB-KW"/>
</dbReference>
<dbReference type="CDD" id="cd12126">
    <property type="entry name" value="APC_beta"/>
    <property type="match status" value="1"/>
</dbReference>
<dbReference type="Gene3D" id="1.10.490.20">
    <property type="entry name" value="Phycocyanins"/>
    <property type="match status" value="1"/>
</dbReference>
<dbReference type="InterPro" id="IPR006245">
    <property type="entry name" value="Allophycocyanin_b"/>
</dbReference>
<dbReference type="InterPro" id="IPR009050">
    <property type="entry name" value="Globin-like_sf"/>
</dbReference>
<dbReference type="InterPro" id="IPR012128">
    <property type="entry name" value="Phycobilisome_asu/bsu"/>
</dbReference>
<dbReference type="InterPro" id="IPR038719">
    <property type="entry name" value="Phycobilisome_asu/bsu_sf"/>
</dbReference>
<dbReference type="NCBIfam" id="TIGR01337">
    <property type="entry name" value="apcB"/>
    <property type="match status" value="1"/>
</dbReference>
<dbReference type="PANTHER" id="PTHR34011:SF3">
    <property type="entry name" value="ALLOPHYCOCYANIN BETA CHAIN"/>
    <property type="match status" value="1"/>
</dbReference>
<dbReference type="PANTHER" id="PTHR34011">
    <property type="entry name" value="PHYCOBILISOME 32.1 KDA LINKER POLYPEPTIDE, PHYCOCYANIN-ASSOCIATED, ROD 2-RELATED"/>
    <property type="match status" value="1"/>
</dbReference>
<dbReference type="Pfam" id="PF00502">
    <property type="entry name" value="Phycobilisome"/>
    <property type="match status" value="1"/>
</dbReference>
<dbReference type="PIRSF" id="PIRSF000081">
    <property type="entry name" value="Phycocyanin"/>
    <property type="match status" value="1"/>
</dbReference>
<dbReference type="SUPFAM" id="SSF46458">
    <property type="entry name" value="Globin-like"/>
    <property type="match status" value="1"/>
</dbReference>
<gene>
    <name type="primary">apcB</name>
    <name type="ordered locus">SYNPCC7002_A1929</name>
</gene>
<protein>
    <recommendedName>
        <fullName>Allophycocyanin beta subunit</fullName>
    </recommendedName>
</protein>
<proteinExistence type="evidence at protein level"/>
<feature type="chain" id="PRO_0000403181" description="Allophycocyanin beta subunit">
    <location>
        <begin position="1"/>
        <end position="161"/>
    </location>
</feature>
<feature type="binding site" description="covalent" evidence="2">
    <location>
        <position position="81"/>
    </location>
    <ligand>
        <name>(2R,3E)-phycocyanobilin</name>
        <dbReference type="ChEBI" id="CHEBI:85275"/>
    </ligand>
</feature>
<feature type="modified residue" description="N4-methylasparagine" evidence="3">
    <location>
        <position position="71"/>
    </location>
</feature>
<evidence type="ECO:0000269" key="1">
    <source>
    </source>
</evidence>
<evidence type="ECO:0000305" key="2"/>
<evidence type="ECO:0000305" key="3">
    <source>
    </source>
</evidence>
<name>APCB_PICP2</name>
<accession>O68970</accession>
<reference key="1">
    <citation type="submission" date="1998-04" db="EMBL/GenBank/DDBJ databases">
        <title>Cloning and characterization of the apcABC operon of Synechococcus sp. PCC 7002.</title>
        <authorList>
            <person name="Zhou J."/>
            <person name="Stirewalt V.L."/>
            <person name="Bryant D.A."/>
        </authorList>
    </citation>
    <scope>NUCLEOTIDE SEQUENCE [GENOMIC DNA]</scope>
    <source>
        <strain>ATCC 27264 / PCC 7002 / PR-6</strain>
    </source>
</reference>
<reference key="2">
    <citation type="submission" date="2008-02" db="EMBL/GenBank/DDBJ databases">
        <title>Complete sequence of Synechococcus sp. PCC 7002.</title>
        <authorList>
            <person name="Li T."/>
            <person name="Zhao J."/>
            <person name="Zhao C."/>
            <person name="Liu Z."/>
            <person name="Zhao F."/>
            <person name="Marquardt J."/>
            <person name="Nomura C.T."/>
            <person name="Persson S."/>
            <person name="Detter J.C."/>
            <person name="Richardson P.M."/>
            <person name="Lanz C."/>
            <person name="Schuster S.C."/>
            <person name="Wang J."/>
            <person name="Li S."/>
            <person name="Huang X."/>
            <person name="Cai T."/>
            <person name="Yu Z."/>
            <person name="Luo J."/>
            <person name="Zhao J."/>
            <person name="Bryant D.A."/>
        </authorList>
    </citation>
    <scope>NUCLEOTIDE SEQUENCE [LARGE SCALE GENOMIC DNA]</scope>
    <source>
        <strain>ATCC 27264 / PCC 7002 / PR-6</strain>
    </source>
</reference>
<reference key="3">
    <citation type="journal article" date="2008" name="J. Biol. Chem.">
        <title>Biogenesis of phycobiliproteins: I. cpcS-I and cpcU mutants of the cyanobacterium Synechococcus sp. PCC 7002 define a heterodimeric phyococyanobilin lyase specific for beta-phycocyanin and allophycocyanin subunits.</title>
        <authorList>
            <person name="Shen G."/>
            <person name="Schluchter W.M."/>
            <person name="Bryant D.A."/>
        </authorList>
    </citation>
    <scope>MASS SPECTROMETRY</scope>
    <scope>METHYLATION AT ASN-71</scope>
    <scope>CHROMOPHORE ATTACHMENT</scope>
    <source>
        <strain>ATCC 27264 / PCC 7002 / PR-6</strain>
    </source>
</reference>
<keyword id="KW-0002">3D-structure</keyword>
<keyword id="KW-0042">Antenna complex</keyword>
<keyword id="KW-0089">Bile pigment</keyword>
<keyword id="KW-0157">Chromophore</keyword>
<keyword id="KW-0249">Electron transport</keyword>
<keyword id="KW-0472">Membrane</keyword>
<keyword id="KW-0488">Methylation</keyword>
<keyword id="KW-0602">Photosynthesis</keyword>
<keyword id="KW-0605">Phycobilisome</keyword>
<keyword id="KW-1185">Reference proteome</keyword>
<keyword id="KW-0793">Thylakoid</keyword>
<keyword id="KW-0813">Transport</keyword>
<comment type="function">
    <text>Light-harvesting photosynthetic bile pigment-protein from the phycobiliprotein complex. Allophycocyanin has a maximum absorption at approximately 650 nanometers.</text>
</comment>
<comment type="subunit">
    <text>Heterodimer of an alpha and a beta chain.</text>
</comment>
<comment type="subcellular location">
    <subcellularLocation>
        <location>Cellular thylakoid membrane</location>
        <topology>Peripheral membrane protein</topology>
        <orientation>Cytoplasmic side</orientation>
    </subcellularLocation>
    <text>Forms the core of the phycobilisome.</text>
</comment>
<comment type="PTM">
    <text>Contains one covalently linked phycocyanobilin chromophore. The chromophore is added by the phycocyanobilin lyase CpcUS.</text>
</comment>
<comment type="mass spectrometry">
    <text>The measured mass is that of the methylated protein plus one covalently linked phycocyanobilin chromophore.</text>
</comment>
<comment type="similarity">
    <text evidence="2">Belongs to the phycobiliprotein family.</text>
</comment>
<organism>
    <name type="scientific">Picosynechococcus sp. (strain ATCC 27264 / PCC 7002 / PR-6)</name>
    <name type="common">Agmenellum quadruplicatum</name>
    <dbReference type="NCBI Taxonomy" id="32049"/>
    <lineage>
        <taxon>Bacteria</taxon>
        <taxon>Bacillati</taxon>
        <taxon>Cyanobacteriota</taxon>
        <taxon>Cyanophyceae</taxon>
        <taxon>Oscillatoriophycideae</taxon>
        <taxon>Chroococcales</taxon>
        <taxon>Geminocystaceae</taxon>
        <taxon>Picosynechococcus</taxon>
    </lineage>
</organism>
<sequence>MQDAITSVINSADVQGKYLDGSAMDKLKAYFTTGALRVRAASTISANAAAIVKEAVAKSLLYSDVTRPGGNMYTTRRYAACIRDLDYYLRYATYAMLAGDPSILDERVLNGLKETYNSLGVPVGSTVQAIQAMKEVTAGLVGADAGREMGVYFDYICSGLS</sequence>